<accession>P46564</accession>
<name>SRV1_CAEEL</name>
<feature type="chain" id="PRO_0000104577" description="Serpentine receptor class V-1">
    <location>
        <begin position="1"/>
        <end position="308"/>
    </location>
</feature>
<feature type="transmembrane region" description="Helical" evidence="1">
    <location>
        <begin position="15"/>
        <end position="35"/>
    </location>
</feature>
<feature type="transmembrane region" description="Helical" evidence="1">
    <location>
        <begin position="46"/>
        <end position="68"/>
    </location>
</feature>
<feature type="transmembrane region" description="Helical" evidence="1">
    <location>
        <begin position="88"/>
        <end position="108"/>
    </location>
</feature>
<feature type="transmembrane region" description="Helical" evidence="1">
    <location>
        <begin position="135"/>
        <end position="155"/>
    </location>
</feature>
<feature type="transmembrane region" description="Helical" evidence="1">
    <location>
        <begin position="184"/>
        <end position="204"/>
    </location>
</feature>
<feature type="transmembrane region" description="Helical" evidence="1">
    <location>
        <begin position="222"/>
        <end position="242"/>
    </location>
</feature>
<feature type="transmembrane region" description="Helical" evidence="1">
    <location>
        <begin position="256"/>
        <end position="276"/>
    </location>
</feature>
<dbReference type="EMBL" id="FO081247">
    <property type="protein sequence ID" value="CCD70174.1"/>
    <property type="molecule type" value="Genomic_DNA"/>
</dbReference>
<dbReference type="PIR" id="T16745">
    <property type="entry name" value="T16745"/>
</dbReference>
<dbReference type="RefSeq" id="NP_498489.2">
    <property type="nucleotide sequence ID" value="NM_066088.5"/>
</dbReference>
<dbReference type="SMR" id="P46564"/>
<dbReference type="FunCoup" id="P46564">
    <property type="interactions" value="14"/>
</dbReference>
<dbReference type="STRING" id="6239.R13F6.3.1"/>
<dbReference type="PaxDb" id="6239-R13F6.3"/>
<dbReference type="EnsemblMetazoa" id="R13F6.3.1">
    <property type="protein sequence ID" value="R13F6.3.1"/>
    <property type="gene ID" value="WBGene00005712"/>
</dbReference>
<dbReference type="EnsemblMetazoa" id="R13F6.3.2">
    <property type="protein sequence ID" value="R13F6.3.2"/>
    <property type="gene ID" value="WBGene00005712"/>
</dbReference>
<dbReference type="GeneID" id="191838"/>
<dbReference type="KEGG" id="cel:CELE_R13F6.3"/>
<dbReference type="UCSC" id="R13F6.3">
    <property type="organism name" value="c. elegans"/>
</dbReference>
<dbReference type="AGR" id="WB:WBGene00005712"/>
<dbReference type="CTD" id="191838"/>
<dbReference type="WormBase" id="R13F6.3">
    <property type="protein sequence ID" value="CE33437"/>
    <property type="gene ID" value="WBGene00005712"/>
    <property type="gene designation" value="srv-1"/>
</dbReference>
<dbReference type="eggNOG" id="ENOG502TGQX">
    <property type="taxonomic scope" value="Eukaryota"/>
</dbReference>
<dbReference type="GeneTree" id="ENSGT00970000195877"/>
<dbReference type="HOGENOM" id="CLU_906829_0_0_1"/>
<dbReference type="InParanoid" id="P46564"/>
<dbReference type="OMA" id="MQYLGHA"/>
<dbReference type="OrthoDB" id="5835292at2759"/>
<dbReference type="PhylomeDB" id="P46564"/>
<dbReference type="PRO" id="PR:P46564"/>
<dbReference type="Proteomes" id="UP000001940">
    <property type="component" value="Chromosome III"/>
</dbReference>
<dbReference type="Bgee" id="WBGene00005712">
    <property type="expression patterns" value="Expressed in larva and 3 other cell types or tissues"/>
</dbReference>
<dbReference type="GO" id="GO:0016020">
    <property type="term" value="C:membrane"/>
    <property type="evidence" value="ECO:0007669"/>
    <property type="project" value="UniProtKB-SubCell"/>
</dbReference>
<dbReference type="CDD" id="cd00637">
    <property type="entry name" value="7tm_classA_rhodopsin-like"/>
    <property type="match status" value="1"/>
</dbReference>
<dbReference type="Gene3D" id="1.20.1070.10">
    <property type="entry name" value="Rhodopsin 7-helix transmembrane proteins"/>
    <property type="match status" value="1"/>
</dbReference>
<dbReference type="InterPro" id="IPR019426">
    <property type="entry name" value="7TM_GPCR_serpentine_rcpt_Srv"/>
</dbReference>
<dbReference type="InterPro" id="IPR017452">
    <property type="entry name" value="GPCR_Rhodpsn_7TM"/>
</dbReference>
<dbReference type="InterPro" id="IPR051119">
    <property type="entry name" value="Nematode_SR-like"/>
</dbReference>
<dbReference type="PANTHER" id="PTHR31627:SF42">
    <property type="entry name" value="G_PROTEIN_RECEP_F1_2 DOMAIN-CONTAINING PROTEIN-RELATED"/>
    <property type="match status" value="1"/>
</dbReference>
<dbReference type="PANTHER" id="PTHR31627">
    <property type="entry name" value="SERPENTINE RECEPTOR CLASS GAMMA-RELATED"/>
    <property type="match status" value="1"/>
</dbReference>
<dbReference type="Pfam" id="PF10323">
    <property type="entry name" value="7TM_GPCR_Srv"/>
    <property type="match status" value="1"/>
</dbReference>
<dbReference type="SUPFAM" id="SSF81321">
    <property type="entry name" value="Family A G protein-coupled receptor-like"/>
    <property type="match status" value="1"/>
</dbReference>
<gene>
    <name type="primary">srv-1</name>
    <name type="synonym">srg-12</name>
    <name type="ORF">R13F6.3</name>
</gene>
<sequence length="308" mass="35077">MTIAFLDVAITIEYVSTAISLVCLPINILFVYILFVERNRPPYNTPFFRLCIHLSIADILMELFSTFFFKFPSFGVFPSTFYKENWSVVPIAGMQYLGHAQAFGIIFIAVNRFTAVHYPIKHRQQWWTPKVTKTLLLIQWITPLFFMAPLFSTDFKFLFSHNSGSVIFAASDARFHKNYFLAMAMVDGILINLIVLLLYGAIFIRVHTHVVVRKPGELALRLALSAFIIFICYLALGVCSLLSALTPPPDAWVYRTMWFVVNDVLCNSSALVLLALNRPIRKAFTRHLGVFSYQGVSTKNHNSLLQAV</sequence>
<reference key="1">
    <citation type="journal article" date="1998" name="Science">
        <title>Genome sequence of the nematode C. elegans: a platform for investigating biology.</title>
        <authorList>
            <consortium name="The C. elegans sequencing consortium"/>
        </authorList>
    </citation>
    <scope>NUCLEOTIDE SEQUENCE [LARGE SCALE GENOMIC DNA]</scope>
    <source>
        <strain>Bristol N2</strain>
    </source>
</reference>
<organism>
    <name type="scientific">Caenorhabditis elegans</name>
    <dbReference type="NCBI Taxonomy" id="6239"/>
    <lineage>
        <taxon>Eukaryota</taxon>
        <taxon>Metazoa</taxon>
        <taxon>Ecdysozoa</taxon>
        <taxon>Nematoda</taxon>
        <taxon>Chromadorea</taxon>
        <taxon>Rhabditida</taxon>
        <taxon>Rhabditina</taxon>
        <taxon>Rhabditomorpha</taxon>
        <taxon>Rhabditoidea</taxon>
        <taxon>Rhabditidae</taxon>
        <taxon>Peloderinae</taxon>
        <taxon>Caenorhabditis</taxon>
    </lineage>
</organism>
<comment type="subcellular location">
    <subcellularLocation>
        <location evidence="2">Membrane</location>
        <topology evidence="2">Multi-pass membrane protein</topology>
    </subcellularLocation>
</comment>
<comment type="similarity">
    <text evidence="2">Belongs to the nematode receptor-like protein srv family.</text>
</comment>
<proteinExistence type="inferred from homology"/>
<protein>
    <recommendedName>
        <fullName>Serpentine receptor class V-1</fullName>
        <shortName>Protein srv-1</shortName>
    </recommendedName>
    <alternativeName>
        <fullName>Protein srg-12</fullName>
    </alternativeName>
</protein>
<evidence type="ECO:0000255" key="1"/>
<evidence type="ECO:0000305" key="2"/>
<keyword id="KW-0472">Membrane</keyword>
<keyword id="KW-1185">Reference proteome</keyword>
<keyword id="KW-0812">Transmembrane</keyword>
<keyword id="KW-1133">Transmembrane helix</keyword>